<evidence type="ECO:0000250" key="1"/>
<evidence type="ECO:0000269" key="2">
    <source>
    </source>
</evidence>
<evidence type="ECO:0000305" key="3"/>
<feature type="signal peptide" evidence="2">
    <location>
        <begin position="1"/>
        <end position="24"/>
    </location>
</feature>
<feature type="chain" id="PRO_0000011699" description="Gonadotropin subunit beta-1">
    <location>
        <begin position="25"/>
        <end position="137"/>
    </location>
</feature>
<feature type="glycosylation site" description="N-linked (GlcNAc...) asparagine">
    <location>
        <position position="36"/>
    </location>
</feature>
<feature type="disulfide bond" evidence="1">
    <location>
        <begin position="32"/>
        <end position="78"/>
    </location>
</feature>
<feature type="disulfide bond" evidence="1">
    <location>
        <begin position="46"/>
        <end position="93"/>
    </location>
</feature>
<feature type="disulfide bond" evidence="1">
    <location>
        <begin position="55"/>
        <end position="108"/>
    </location>
</feature>
<feature type="disulfide bond" evidence="1">
    <location>
        <begin position="59"/>
        <end position="110"/>
    </location>
</feature>
<feature type="disulfide bond" evidence="1">
    <location>
        <begin position="113"/>
        <end position="120"/>
    </location>
</feature>
<feature type="sequence conflict" description="In Ref. 2; AA sequence." evidence="3" ref="2">
    <original>Q</original>
    <variation>E</variation>
    <location>
        <position position="67"/>
    </location>
</feature>
<gene>
    <name type="primary">cgba</name>
</gene>
<dbReference type="EMBL" id="M27153">
    <property type="protein sequence ID" value="AAA49408.1"/>
    <property type="molecule type" value="mRNA"/>
</dbReference>
<dbReference type="PIR" id="B36179">
    <property type="entry name" value="B36179"/>
</dbReference>
<dbReference type="SMR" id="P10257"/>
<dbReference type="GlyCosmos" id="P10257">
    <property type="glycosylation" value="1 site, No reported glycans"/>
</dbReference>
<dbReference type="OrthoDB" id="8903627at2759"/>
<dbReference type="GO" id="GO:0005737">
    <property type="term" value="C:cytoplasm"/>
    <property type="evidence" value="ECO:0007669"/>
    <property type="project" value="TreeGrafter"/>
</dbReference>
<dbReference type="GO" id="GO:0005615">
    <property type="term" value="C:extracellular space"/>
    <property type="evidence" value="ECO:0007669"/>
    <property type="project" value="TreeGrafter"/>
</dbReference>
<dbReference type="GO" id="GO:0005179">
    <property type="term" value="F:hormone activity"/>
    <property type="evidence" value="ECO:0007669"/>
    <property type="project" value="UniProtKB-KW"/>
</dbReference>
<dbReference type="GO" id="GO:0007186">
    <property type="term" value="P:G protein-coupled receptor signaling pathway"/>
    <property type="evidence" value="ECO:0007669"/>
    <property type="project" value="TreeGrafter"/>
</dbReference>
<dbReference type="GO" id="GO:0030728">
    <property type="term" value="P:ovulation"/>
    <property type="evidence" value="ECO:0007669"/>
    <property type="project" value="TreeGrafter"/>
</dbReference>
<dbReference type="CDD" id="cd00069">
    <property type="entry name" value="GHB_like"/>
    <property type="match status" value="1"/>
</dbReference>
<dbReference type="FunFam" id="2.10.90.10:FF:000007">
    <property type="entry name" value="Luteinizing hormone beta subunit"/>
    <property type="match status" value="1"/>
</dbReference>
<dbReference type="Gene3D" id="2.10.90.10">
    <property type="entry name" value="Cystine-knot cytokines"/>
    <property type="match status" value="1"/>
</dbReference>
<dbReference type="InterPro" id="IPR029034">
    <property type="entry name" value="Cystine-knot_cytokine"/>
</dbReference>
<dbReference type="InterPro" id="IPR006208">
    <property type="entry name" value="Glyco_hormone_CN"/>
</dbReference>
<dbReference type="InterPro" id="IPR001545">
    <property type="entry name" value="Gonadotropin_bsu"/>
</dbReference>
<dbReference type="InterPro" id="IPR018245">
    <property type="entry name" value="Gonadotropin_bsu_CS"/>
</dbReference>
<dbReference type="PANTHER" id="PTHR11515">
    <property type="entry name" value="GLYCOPROTEIN HORMONE BETA CHAIN"/>
    <property type="match status" value="1"/>
</dbReference>
<dbReference type="PANTHER" id="PTHR11515:SF11">
    <property type="entry name" value="LUTROPIN SUBUNIT BETA"/>
    <property type="match status" value="1"/>
</dbReference>
<dbReference type="Pfam" id="PF00007">
    <property type="entry name" value="Cys_knot"/>
    <property type="match status" value="1"/>
</dbReference>
<dbReference type="SMART" id="SM00068">
    <property type="entry name" value="GHB"/>
    <property type="match status" value="1"/>
</dbReference>
<dbReference type="SUPFAM" id="SSF57501">
    <property type="entry name" value="Cystine-knot cytokines"/>
    <property type="match status" value="1"/>
</dbReference>
<dbReference type="PROSITE" id="PS00261">
    <property type="entry name" value="GLYCO_HORMONE_BETA_1"/>
    <property type="match status" value="1"/>
</dbReference>
<dbReference type="PROSITE" id="PS00689">
    <property type="entry name" value="GLYCO_HORMONE_BETA_2"/>
    <property type="match status" value="1"/>
</dbReference>
<sequence length="137" mass="15442">MYCTHLMTLQLVVMAMLWVTPVRAGTECRYGCRLNNMTIIVEREDCHGSITITTCAGLCETTDLNYQSTWLPRSQGVCNFKEWSYEKVYLEGCPSGVEPFFIPVAKSCDCIKCKTDNTDCDRISMATPSCIVNPLEM</sequence>
<comment type="function">
    <text>Involved in gametogenesis and steroidogenesis.</text>
</comment>
<comment type="subunit">
    <text>Heterodimer of an alpha and a beta chain.</text>
</comment>
<comment type="subcellular location">
    <subcellularLocation>
        <location>Secreted</location>
    </subcellularLocation>
</comment>
<comment type="similarity">
    <text evidence="3">Belongs to the glycoprotein hormones subunit beta family.</text>
</comment>
<proteinExistence type="evidence at protein level"/>
<accession>P10257</accession>
<name>GTHB1_ONCKE</name>
<keyword id="KW-0903">Direct protein sequencing</keyword>
<keyword id="KW-1015">Disulfide bond</keyword>
<keyword id="KW-0325">Glycoprotein</keyword>
<keyword id="KW-0372">Hormone</keyword>
<keyword id="KW-0964">Secreted</keyword>
<keyword id="KW-0732">Signal</keyword>
<reference key="1">
    <citation type="journal article" date="1989" name="Proc. Natl. Acad. Sci. U.S.A.">
        <title>Molecular cloning and sequence analysis of chum salmon gonadotropin cDNAs.</title>
        <authorList>
            <person name="Sekine S."/>
            <person name="Saito A."/>
            <person name="Itoh H."/>
            <person name="Kawauchi H."/>
            <person name="Itoh S."/>
        </authorList>
    </citation>
    <scope>NUCLEOTIDE SEQUENCE [MRNA]</scope>
</reference>
<reference key="2">
    <citation type="journal article" date="1988" name="Gen. Comp. Endocrinol.">
        <title>The complete amino acid sequences of beta-subunits of two distinct chum salmon GTHs.</title>
        <authorList>
            <person name="Itoh H."/>
            <person name="Suzuki K."/>
            <person name="Kawauchi H."/>
        </authorList>
    </citation>
    <scope>PROTEIN SEQUENCE OF 25-137</scope>
</reference>
<organism>
    <name type="scientific">Oncorhynchus keta</name>
    <name type="common">Chum salmon</name>
    <name type="synonym">Salmo keta</name>
    <dbReference type="NCBI Taxonomy" id="8018"/>
    <lineage>
        <taxon>Eukaryota</taxon>
        <taxon>Metazoa</taxon>
        <taxon>Chordata</taxon>
        <taxon>Craniata</taxon>
        <taxon>Vertebrata</taxon>
        <taxon>Euteleostomi</taxon>
        <taxon>Actinopterygii</taxon>
        <taxon>Neopterygii</taxon>
        <taxon>Teleostei</taxon>
        <taxon>Protacanthopterygii</taxon>
        <taxon>Salmoniformes</taxon>
        <taxon>Salmonidae</taxon>
        <taxon>Salmoninae</taxon>
        <taxon>Oncorhynchus</taxon>
    </lineage>
</organism>
<protein>
    <recommendedName>
        <fullName>Gonadotropin subunit beta-1</fullName>
    </recommendedName>
    <alternativeName>
        <fullName>GTH-I-beta</fullName>
    </alternativeName>
    <alternativeName>
        <fullName>Gonadotropin beta-I chain</fullName>
    </alternativeName>
</protein>